<keyword id="KW-0967">Endosome</keyword>
<keyword id="KW-0333">Golgi apparatus</keyword>
<keyword id="KW-0472">Membrane</keyword>
<keyword id="KW-0597">Phosphoprotein</keyword>
<keyword id="KW-0653">Protein transport</keyword>
<keyword id="KW-1185">Reference proteome</keyword>
<keyword id="KW-0813">Transport</keyword>
<gene>
    <name type="primary">Vps45</name>
    <name type="synonym">Vps45a</name>
</gene>
<sequence length="570" mass="65053">MNVVFAVKQYISKMIEDSGPGMKVLLMDKETTGIVSMVYTQSEILQKEVYLFERIDSQNREIMKHLKAICFLRPTKENVEYLIQELRRPKYSIYFIYFSNVISKSDVKSLAEADEQEVVAEVQEFYGDYIAVNPHLFSLNILGCCQGRNWDPAQLSRTTQGLTALLLSLKKCPMIRYQLSSEAAKRLGECVKQVISKEYELFEFRRTEVPPLLLILDRCDDAITPLLNQWTYQAMVHELLGINNNRIDLSRVPGISKDLREVVLSAENDEFYANNMYLNFAEIGSNIKNLMEDFQKKRPKEQQKLESIADMKAFVENYPQFKKMSGTVSKHVTVVGELSRLVSERNLLEVSEVEQELACQNDHSSALQNVKRLLQNPKVTEFDAVRLVMLYALHYERHSSNSLPGLIVDLRSKGVAEKYRKLVSAVVEYGGKRVRGSDLFSPKDAVAITKQFLKGLKGVENVYTQHQPFLHETLDHLIKGRLKENLYPYLGPSTLRDRPQDIIVFIIGGATYEEALTVYNLNRTTPGVRIVLGGTTIHNTKSFLEEVLASGLHSRSRESSQATSRSANRR</sequence>
<feature type="chain" id="PRO_0000206313" description="Vacuolar protein sorting-associated protein 45">
    <location>
        <begin position="1"/>
        <end position="570"/>
    </location>
</feature>
<feature type="modified residue" description="Phosphoserine" evidence="3">
    <location>
        <position position="307"/>
    </location>
</feature>
<feature type="modified residue" description="Phosphoserine" evidence="2">
    <location>
        <position position="441"/>
    </location>
</feature>
<feature type="sequence conflict" description="In Ref. 2; AAH12691." evidence="5" ref="2">
    <original>I</original>
    <variation>M</variation>
    <location>
        <position position="55"/>
    </location>
</feature>
<accession>P97390</accession>
<accession>Q91VK9</accession>
<reference key="1">
    <citation type="journal article" date="1997" name="J. Biol. Chem.">
        <title>Identification of a mammalian Golgi Sec1p-like protein, mVps45.</title>
        <authorList>
            <person name="Tellam J.T."/>
            <person name="James D.E."/>
            <person name="Stevens T.H."/>
            <person name="Piper R.C."/>
        </authorList>
    </citation>
    <scope>NUCLEOTIDE SEQUENCE [MRNA]</scope>
    <scope>INTERACTION WITH STX6</scope>
    <source>
        <strain>Swiss albino</strain>
        <tissue>Adipocyte</tissue>
    </source>
</reference>
<reference key="2">
    <citation type="journal article" date="2004" name="Genome Res.">
        <title>The status, quality, and expansion of the NIH full-length cDNA project: the Mammalian Gene Collection (MGC).</title>
        <authorList>
            <consortium name="The MGC Project Team"/>
        </authorList>
    </citation>
    <scope>NUCLEOTIDE SEQUENCE [LARGE SCALE MRNA]</scope>
    <source>
        <strain>C57BL/6J</strain>
        <tissue>Brain</tissue>
        <tissue>Mammary tumor</tissue>
    </source>
</reference>
<reference key="3">
    <citation type="journal article" date="2010" name="Cell">
        <title>A tissue-specific atlas of mouse protein phosphorylation and expression.</title>
        <authorList>
            <person name="Huttlin E.L."/>
            <person name="Jedrychowski M.P."/>
            <person name="Elias J.E."/>
            <person name="Goswami T."/>
            <person name="Rad R."/>
            <person name="Beausoleil S.A."/>
            <person name="Villen J."/>
            <person name="Haas W."/>
            <person name="Sowa M.E."/>
            <person name="Gygi S.P."/>
        </authorList>
    </citation>
    <scope>IDENTIFICATION BY MASS SPECTROMETRY [LARGE SCALE ANALYSIS]</scope>
    <source>
        <tissue>Brain</tissue>
        <tissue>Brown adipose tissue</tissue>
        <tissue>Heart</tissue>
        <tissue>Kidney</tissue>
        <tissue>Liver</tissue>
        <tissue>Lung</tissue>
        <tissue>Pancreas</tissue>
        <tissue>Spleen</tissue>
        <tissue>Testis</tissue>
    </source>
</reference>
<evidence type="ECO:0000250" key="1"/>
<evidence type="ECO:0000250" key="2">
    <source>
        <dbReference type="UniProtKB" id="O08700"/>
    </source>
</evidence>
<evidence type="ECO:0000250" key="3">
    <source>
        <dbReference type="UniProtKB" id="Q9NRW7"/>
    </source>
</evidence>
<evidence type="ECO:0000269" key="4">
    <source>
    </source>
</evidence>
<evidence type="ECO:0000305" key="5"/>
<dbReference type="EMBL" id="U66865">
    <property type="protein sequence ID" value="AAB37577.1"/>
    <property type="molecule type" value="mRNA"/>
</dbReference>
<dbReference type="EMBL" id="BC012691">
    <property type="protein sequence ID" value="AAH12691.1"/>
    <property type="molecule type" value="mRNA"/>
</dbReference>
<dbReference type="EMBL" id="BC058528">
    <property type="protein sequence ID" value="AAH58528.1"/>
    <property type="molecule type" value="mRNA"/>
</dbReference>
<dbReference type="CCDS" id="CCDS17628.1"/>
<dbReference type="RefSeq" id="NP_038869.1">
    <property type="nucleotide sequence ID" value="NM_013841.3"/>
</dbReference>
<dbReference type="SMR" id="P97390"/>
<dbReference type="BioGRID" id="204535">
    <property type="interactions" value="17"/>
</dbReference>
<dbReference type="FunCoup" id="P97390">
    <property type="interactions" value="3730"/>
</dbReference>
<dbReference type="IntAct" id="P97390">
    <property type="interactions" value="2"/>
</dbReference>
<dbReference type="MINT" id="P97390"/>
<dbReference type="STRING" id="10090.ENSMUSP00000015891"/>
<dbReference type="iPTMnet" id="P97390"/>
<dbReference type="PhosphoSitePlus" id="P97390"/>
<dbReference type="SwissPalm" id="P97390"/>
<dbReference type="jPOST" id="P97390"/>
<dbReference type="PaxDb" id="10090-ENSMUSP00000015891"/>
<dbReference type="PeptideAtlas" id="P97390"/>
<dbReference type="ProteomicsDB" id="275183"/>
<dbReference type="Pumba" id="P97390"/>
<dbReference type="Antibodypedia" id="34017">
    <property type="antibodies" value="289 antibodies from 30 providers"/>
</dbReference>
<dbReference type="DNASU" id="22365"/>
<dbReference type="Ensembl" id="ENSMUST00000015891.6">
    <property type="protein sequence ID" value="ENSMUSP00000015891.6"/>
    <property type="gene ID" value="ENSMUSG00000015747.6"/>
</dbReference>
<dbReference type="GeneID" id="22365"/>
<dbReference type="KEGG" id="mmu:22365"/>
<dbReference type="UCSC" id="uc008qly.2">
    <property type="organism name" value="mouse"/>
</dbReference>
<dbReference type="AGR" id="MGI:891965"/>
<dbReference type="CTD" id="11311"/>
<dbReference type="MGI" id="MGI:891965">
    <property type="gene designation" value="Vps45"/>
</dbReference>
<dbReference type="VEuPathDB" id="HostDB:ENSMUSG00000015747"/>
<dbReference type="eggNOG" id="KOG1299">
    <property type="taxonomic scope" value="Eukaryota"/>
</dbReference>
<dbReference type="GeneTree" id="ENSGT00550000075028"/>
<dbReference type="HOGENOM" id="CLU_013933_3_1_1"/>
<dbReference type="InParanoid" id="P97390"/>
<dbReference type="OMA" id="VHQLNNA"/>
<dbReference type="OrthoDB" id="10266265at2759"/>
<dbReference type="PhylomeDB" id="P97390"/>
<dbReference type="TreeFam" id="TF300407"/>
<dbReference type="Reactome" id="R-MMU-6811438">
    <property type="pathway name" value="Intra-Golgi traffic"/>
</dbReference>
<dbReference type="Reactome" id="R-MMU-983231">
    <property type="pathway name" value="Factors involved in megakaryocyte development and platelet production"/>
</dbReference>
<dbReference type="BioGRID-ORCS" id="22365">
    <property type="hits" value="16 hits in 79 CRISPR screens"/>
</dbReference>
<dbReference type="CD-CODE" id="CE726F99">
    <property type="entry name" value="Postsynaptic density"/>
</dbReference>
<dbReference type="ChiTaRS" id="Vps45">
    <property type="organism name" value="mouse"/>
</dbReference>
<dbReference type="PRO" id="PR:P97390"/>
<dbReference type="Proteomes" id="UP000000589">
    <property type="component" value="Chromosome 3"/>
</dbReference>
<dbReference type="RNAct" id="P97390">
    <property type="molecule type" value="protein"/>
</dbReference>
<dbReference type="Bgee" id="ENSMUSG00000015747">
    <property type="expression patterns" value="Expressed in retinal neural layer and 236 other cell types or tissues"/>
</dbReference>
<dbReference type="GO" id="GO:0010008">
    <property type="term" value="C:endosome membrane"/>
    <property type="evidence" value="ECO:0000314"/>
    <property type="project" value="MGI"/>
</dbReference>
<dbReference type="GO" id="GO:0000139">
    <property type="term" value="C:Golgi membrane"/>
    <property type="evidence" value="ECO:0000314"/>
    <property type="project" value="MGI"/>
</dbReference>
<dbReference type="GO" id="GO:0008021">
    <property type="term" value="C:synaptic vesicle"/>
    <property type="evidence" value="ECO:0007669"/>
    <property type="project" value="Ensembl"/>
</dbReference>
<dbReference type="GO" id="GO:0015031">
    <property type="term" value="P:protein transport"/>
    <property type="evidence" value="ECO:0007669"/>
    <property type="project" value="UniProtKB-KW"/>
</dbReference>
<dbReference type="GO" id="GO:0016192">
    <property type="term" value="P:vesicle-mediated transport"/>
    <property type="evidence" value="ECO:0007669"/>
    <property type="project" value="InterPro"/>
</dbReference>
<dbReference type="FunFam" id="1.25.40.60:FF:000003">
    <property type="entry name" value="Vacuolar protein sorting-associated protein 45"/>
    <property type="match status" value="1"/>
</dbReference>
<dbReference type="FunFam" id="3.90.830.10:FF:000002">
    <property type="entry name" value="Vacuolar protein sorting-associated protein 45"/>
    <property type="match status" value="1"/>
</dbReference>
<dbReference type="FunFam" id="3.40.50.2060:FF:000003">
    <property type="entry name" value="vacuolar protein sorting-associated protein 45 isoform X1"/>
    <property type="match status" value="1"/>
</dbReference>
<dbReference type="Gene3D" id="1.25.40.60">
    <property type="match status" value="1"/>
</dbReference>
<dbReference type="Gene3D" id="3.40.50.1910">
    <property type="match status" value="1"/>
</dbReference>
<dbReference type="Gene3D" id="3.40.50.2060">
    <property type="match status" value="1"/>
</dbReference>
<dbReference type="Gene3D" id="3.90.830.10">
    <property type="entry name" value="Syntaxin Binding Protein 1, Chain A, domain 2"/>
    <property type="match status" value="1"/>
</dbReference>
<dbReference type="InterPro" id="IPR043154">
    <property type="entry name" value="Sec-1-like_dom1"/>
</dbReference>
<dbReference type="InterPro" id="IPR043127">
    <property type="entry name" value="Sec-1-like_dom3a"/>
</dbReference>
<dbReference type="InterPro" id="IPR001619">
    <property type="entry name" value="Sec1-like"/>
</dbReference>
<dbReference type="InterPro" id="IPR027482">
    <property type="entry name" value="Sec1-like_dom2"/>
</dbReference>
<dbReference type="InterPro" id="IPR036045">
    <property type="entry name" value="Sec1-like_sf"/>
</dbReference>
<dbReference type="PANTHER" id="PTHR11679">
    <property type="entry name" value="VESICLE PROTEIN SORTING-ASSOCIATED"/>
    <property type="match status" value="1"/>
</dbReference>
<dbReference type="Pfam" id="PF00995">
    <property type="entry name" value="Sec1"/>
    <property type="match status" value="1"/>
</dbReference>
<dbReference type="PIRSF" id="PIRSF005715">
    <property type="entry name" value="VPS45_Sec1"/>
    <property type="match status" value="1"/>
</dbReference>
<dbReference type="SUPFAM" id="SSF56815">
    <property type="entry name" value="Sec1/munc18-like (SM) proteins"/>
    <property type="match status" value="1"/>
</dbReference>
<organism>
    <name type="scientific">Mus musculus</name>
    <name type="common">Mouse</name>
    <dbReference type="NCBI Taxonomy" id="10090"/>
    <lineage>
        <taxon>Eukaryota</taxon>
        <taxon>Metazoa</taxon>
        <taxon>Chordata</taxon>
        <taxon>Craniata</taxon>
        <taxon>Vertebrata</taxon>
        <taxon>Euteleostomi</taxon>
        <taxon>Mammalia</taxon>
        <taxon>Eutheria</taxon>
        <taxon>Euarchontoglires</taxon>
        <taxon>Glires</taxon>
        <taxon>Rodentia</taxon>
        <taxon>Myomorpha</taxon>
        <taxon>Muroidea</taxon>
        <taxon>Muridae</taxon>
        <taxon>Murinae</taxon>
        <taxon>Mus</taxon>
        <taxon>Mus</taxon>
    </lineage>
</organism>
<protein>
    <recommendedName>
        <fullName>Vacuolar protein sorting-associated protein 45</fullName>
        <shortName>mVps45</shortName>
    </recommendedName>
</protein>
<name>VPS45_MOUSE</name>
<comment type="function">
    <text>May play a role in vesicle-mediated protein trafficking from the Golgi stack through the trans-Golgi network.</text>
</comment>
<comment type="subunit">
    <text evidence="1 4">Interacts with ZFYVE20 (By similarity). Interacts with STX6.</text>
</comment>
<comment type="subcellular location">
    <subcellularLocation>
        <location>Golgi apparatus membrane</location>
        <topology>Peripheral membrane protein</topology>
    </subcellularLocation>
    <subcellularLocation>
        <location>Endosome membrane</location>
        <topology>Peripheral membrane protein</topology>
    </subcellularLocation>
    <text>Associated with Golgi/endosomal vesicles and the trans-Golgi network.</text>
</comment>
<comment type="similarity">
    <text evidence="5">Belongs to the STXBP/unc-18/SEC1 family.</text>
</comment>
<proteinExistence type="evidence at protein level"/>